<comment type="catalytic activity">
    <reaction>
        <text>L-seryl-[protein] + ATP = O-phospho-L-seryl-[protein] + ADP + H(+)</text>
        <dbReference type="Rhea" id="RHEA:17989"/>
        <dbReference type="Rhea" id="RHEA-COMP:9863"/>
        <dbReference type="Rhea" id="RHEA-COMP:11604"/>
        <dbReference type="ChEBI" id="CHEBI:15378"/>
        <dbReference type="ChEBI" id="CHEBI:29999"/>
        <dbReference type="ChEBI" id="CHEBI:30616"/>
        <dbReference type="ChEBI" id="CHEBI:83421"/>
        <dbReference type="ChEBI" id="CHEBI:456216"/>
        <dbReference type="EC" id="2.7.11.11"/>
    </reaction>
</comment>
<comment type="catalytic activity">
    <reaction>
        <text>L-threonyl-[protein] + ATP = O-phospho-L-threonyl-[protein] + ADP + H(+)</text>
        <dbReference type="Rhea" id="RHEA:46608"/>
        <dbReference type="Rhea" id="RHEA-COMP:11060"/>
        <dbReference type="Rhea" id="RHEA-COMP:11605"/>
        <dbReference type="ChEBI" id="CHEBI:15378"/>
        <dbReference type="ChEBI" id="CHEBI:30013"/>
        <dbReference type="ChEBI" id="CHEBI:30616"/>
        <dbReference type="ChEBI" id="CHEBI:61977"/>
        <dbReference type="ChEBI" id="CHEBI:456216"/>
        <dbReference type="EC" id="2.7.11.11"/>
    </reaction>
</comment>
<comment type="activity regulation">
    <text evidence="1">Activated by cAMP.</text>
</comment>
<comment type="similarity">
    <text evidence="7">Belongs to the protein kinase superfamily. AGC Ser/Thr protein kinase family. cAMP subfamily.</text>
</comment>
<evidence type="ECO:0000250" key="1"/>
<evidence type="ECO:0000255" key="2">
    <source>
        <dbReference type="PROSITE-ProRule" id="PRU00159"/>
    </source>
</evidence>
<evidence type="ECO:0000255" key="3">
    <source>
        <dbReference type="PROSITE-ProRule" id="PRU00618"/>
    </source>
</evidence>
<evidence type="ECO:0000255" key="4">
    <source>
        <dbReference type="PROSITE-ProRule" id="PRU10027"/>
    </source>
</evidence>
<evidence type="ECO:0000256" key="5">
    <source>
        <dbReference type="SAM" id="MobiDB-lite"/>
    </source>
</evidence>
<evidence type="ECO:0000269" key="6">
    <source>
    </source>
</evidence>
<evidence type="ECO:0000305" key="7"/>
<protein>
    <recommendedName>
        <fullName>cAMP-dependent protein kinase catalytic subunit</fullName>
        <ecNumber>2.7.11.11</ecNumber>
    </recommendedName>
</protein>
<dbReference type="EC" id="2.7.11.11"/>
<dbReference type="EMBL" id="U08622">
    <property type="protein sequence ID" value="AAA70165.1"/>
    <property type="molecule type" value="mRNA"/>
</dbReference>
<dbReference type="EMBL" id="D23667">
    <property type="protein sequence ID" value="BAA04891.1"/>
    <property type="molecule type" value="Genomic_DNA"/>
</dbReference>
<dbReference type="EMBL" id="CU329671">
    <property type="protein sequence ID" value="CAB53726.1"/>
    <property type="molecule type" value="Genomic_DNA"/>
</dbReference>
<dbReference type="PIR" id="A54400">
    <property type="entry name" value="A54400"/>
</dbReference>
<dbReference type="RefSeq" id="NP_595159.1">
    <property type="nucleotide sequence ID" value="NM_001021068.2"/>
</dbReference>
<dbReference type="SMR" id="P40376"/>
<dbReference type="BioGRID" id="276331">
    <property type="interactions" value="60"/>
</dbReference>
<dbReference type="FunCoup" id="P40376">
    <property type="interactions" value="398"/>
</dbReference>
<dbReference type="STRING" id="284812.P40376"/>
<dbReference type="iPTMnet" id="P40376"/>
<dbReference type="PaxDb" id="4896-SPBC106.10.1"/>
<dbReference type="EnsemblFungi" id="SPBC106.10.1">
    <property type="protein sequence ID" value="SPBC106.10.1:pep"/>
    <property type="gene ID" value="SPBC106.10"/>
</dbReference>
<dbReference type="GeneID" id="2539781"/>
<dbReference type="KEGG" id="spo:2539781"/>
<dbReference type="PomBase" id="SPBC106.10">
    <property type="gene designation" value="pka1"/>
</dbReference>
<dbReference type="VEuPathDB" id="FungiDB:SPBC106.10"/>
<dbReference type="eggNOG" id="KOG0616">
    <property type="taxonomic scope" value="Eukaryota"/>
</dbReference>
<dbReference type="HOGENOM" id="CLU_000288_63_3_1"/>
<dbReference type="InParanoid" id="P40376"/>
<dbReference type="OMA" id="HNESSLW"/>
<dbReference type="PhylomeDB" id="P40376"/>
<dbReference type="BRENDA" id="2.7.11.11">
    <property type="organism ID" value="5613"/>
</dbReference>
<dbReference type="Reactome" id="R-SPO-163615">
    <property type="pathway name" value="PKA activation"/>
</dbReference>
<dbReference type="Reactome" id="R-SPO-164378">
    <property type="pathway name" value="PKA activation in glucagon signalling"/>
</dbReference>
<dbReference type="Reactome" id="R-SPO-180024">
    <property type="pathway name" value="DARPP-32 events"/>
</dbReference>
<dbReference type="Reactome" id="R-SPO-432040">
    <property type="pathway name" value="Vasopressin regulates renal water homeostasis via Aquaporins"/>
</dbReference>
<dbReference type="Reactome" id="R-SPO-442720">
    <property type="pathway name" value="CREB1 phosphorylation through the activation of Adenylate Cyclase"/>
</dbReference>
<dbReference type="Reactome" id="R-SPO-5610787">
    <property type="pathway name" value="Hedgehog 'off' state"/>
</dbReference>
<dbReference type="Reactome" id="R-SPO-9634597">
    <property type="pathway name" value="GPER1 signaling"/>
</dbReference>
<dbReference type="Reactome" id="R-SPO-983231">
    <property type="pathway name" value="Factors involved in megakaryocyte development and platelet production"/>
</dbReference>
<dbReference type="Reactome" id="R-SPO-9837999">
    <property type="pathway name" value="Mitochondrial protein degradation"/>
</dbReference>
<dbReference type="Reactome" id="R-SPO-9856530">
    <property type="pathway name" value="High laminar flow shear stress activates signaling by PIEZO1 and PECAM1:CDH5:KDR in endothelial cells"/>
</dbReference>
<dbReference type="PRO" id="PR:P40376"/>
<dbReference type="Proteomes" id="UP000002485">
    <property type="component" value="Chromosome II"/>
</dbReference>
<dbReference type="GO" id="GO:0005952">
    <property type="term" value="C:cAMP-dependent protein kinase complex"/>
    <property type="evidence" value="ECO:0000353"/>
    <property type="project" value="PomBase"/>
</dbReference>
<dbReference type="GO" id="GO:0005737">
    <property type="term" value="C:cytoplasm"/>
    <property type="evidence" value="ECO:0000314"/>
    <property type="project" value="PomBase"/>
</dbReference>
<dbReference type="GO" id="GO:0005829">
    <property type="term" value="C:cytosol"/>
    <property type="evidence" value="ECO:0000314"/>
    <property type="project" value="PomBase"/>
</dbReference>
<dbReference type="GO" id="GO:0000324">
    <property type="term" value="C:fungal-type vacuole"/>
    <property type="evidence" value="ECO:0000314"/>
    <property type="project" value="PomBase"/>
</dbReference>
<dbReference type="GO" id="GO:0005654">
    <property type="term" value="C:nucleoplasm"/>
    <property type="evidence" value="ECO:0000314"/>
    <property type="project" value="PomBase"/>
</dbReference>
<dbReference type="GO" id="GO:0005634">
    <property type="term" value="C:nucleus"/>
    <property type="evidence" value="ECO:0000314"/>
    <property type="project" value="PomBase"/>
</dbReference>
<dbReference type="GO" id="GO:0005524">
    <property type="term" value="F:ATP binding"/>
    <property type="evidence" value="ECO:0007669"/>
    <property type="project" value="UniProtKB-KW"/>
</dbReference>
<dbReference type="GO" id="GO:0004691">
    <property type="term" value="F:cAMP-dependent protein kinase activity"/>
    <property type="evidence" value="ECO:0000316"/>
    <property type="project" value="PomBase"/>
</dbReference>
<dbReference type="GO" id="GO:0106310">
    <property type="term" value="F:protein serine kinase activity"/>
    <property type="evidence" value="ECO:0007669"/>
    <property type="project" value="RHEA"/>
</dbReference>
<dbReference type="GO" id="GO:0004674">
    <property type="term" value="F:protein serine/threonine kinase activity"/>
    <property type="evidence" value="ECO:0000314"/>
    <property type="project" value="PomBase"/>
</dbReference>
<dbReference type="GO" id="GO:0007189">
    <property type="term" value="P:adenylate cyclase-activating G protein-coupled receptor signaling pathway"/>
    <property type="evidence" value="ECO:0000315"/>
    <property type="project" value="PomBase"/>
</dbReference>
<dbReference type="GO" id="GO:0010619">
    <property type="term" value="P:adenylate cyclase-activating glucose-activated G protein-coupled receptor signaling pathway"/>
    <property type="evidence" value="ECO:0000315"/>
    <property type="project" value="PomBase"/>
</dbReference>
<dbReference type="GO" id="GO:0045721">
    <property type="term" value="P:negative regulation of gluconeogenesis"/>
    <property type="evidence" value="ECO:0000315"/>
    <property type="project" value="PomBase"/>
</dbReference>
<dbReference type="GO" id="GO:0010515">
    <property type="term" value="P:negative regulation of induction of conjugation with cellular fusion"/>
    <property type="evidence" value="ECO:0000315"/>
    <property type="project" value="PomBase"/>
</dbReference>
<dbReference type="GO" id="GO:0000122">
    <property type="term" value="P:negative regulation of transcription by RNA polymerase II"/>
    <property type="evidence" value="ECO:0000315"/>
    <property type="project" value="PomBase"/>
</dbReference>
<dbReference type="GO" id="GO:0031117">
    <property type="term" value="P:positive regulation of microtubule depolymerization"/>
    <property type="evidence" value="ECO:0000269"/>
    <property type="project" value="PomBase"/>
</dbReference>
<dbReference type="GO" id="GO:0046827">
    <property type="term" value="P:positive regulation of protein export from nucleus"/>
    <property type="evidence" value="ECO:0000315"/>
    <property type="project" value="PomBase"/>
</dbReference>
<dbReference type="GO" id="GO:0007165">
    <property type="term" value="P:signal transduction"/>
    <property type="evidence" value="ECO:0000318"/>
    <property type="project" value="GO_Central"/>
</dbReference>
<dbReference type="CDD" id="cd05580">
    <property type="entry name" value="STKc_PKA_like"/>
    <property type="match status" value="1"/>
</dbReference>
<dbReference type="FunFam" id="3.30.200.20:FF:000005">
    <property type="entry name" value="cAMP-dependent protein kinase catalytic subunit"/>
    <property type="match status" value="1"/>
</dbReference>
<dbReference type="FunFam" id="1.10.510.10:FF:000005">
    <property type="entry name" value="cAMP-dependent protein kinase catalytic subunit alpha"/>
    <property type="match status" value="1"/>
</dbReference>
<dbReference type="Gene3D" id="3.30.200.20">
    <property type="entry name" value="Phosphorylase Kinase, domain 1"/>
    <property type="match status" value="1"/>
</dbReference>
<dbReference type="Gene3D" id="1.10.510.10">
    <property type="entry name" value="Transferase(Phosphotransferase) domain 1"/>
    <property type="match status" value="1"/>
</dbReference>
<dbReference type="InterPro" id="IPR000961">
    <property type="entry name" value="AGC-kinase_C"/>
</dbReference>
<dbReference type="InterPro" id="IPR011009">
    <property type="entry name" value="Kinase-like_dom_sf"/>
</dbReference>
<dbReference type="InterPro" id="IPR000719">
    <property type="entry name" value="Prot_kinase_dom"/>
</dbReference>
<dbReference type="InterPro" id="IPR017441">
    <property type="entry name" value="Protein_kinase_ATP_BS"/>
</dbReference>
<dbReference type="InterPro" id="IPR008271">
    <property type="entry name" value="Ser/Thr_kinase_AS"/>
</dbReference>
<dbReference type="PANTHER" id="PTHR24353:SF153">
    <property type="entry name" value="CAMP-DEPENDENT PROTEIN KINASE CATALYTIC SUBUNIT 1"/>
    <property type="match status" value="1"/>
</dbReference>
<dbReference type="PANTHER" id="PTHR24353">
    <property type="entry name" value="CYCLIC NUCLEOTIDE-DEPENDENT PROTEIN KINASE"/>
    <property type="match status" value="1"/>
</dbReference>
<dbReference type="Pfam" id="PF00069">
    <property type="entry name" value="Pkinase"/>
    <property type="match status" value="1"/>
</dbReference>
<dbReference type="SMART" id="SM00133">
    <property type="entry name" value="S_TK_X"/>
    <property type="match status" value="1"/>
</dbReference>
<dbReference type="SMART" id="SM00220">
    <property type="entry name" value="S_TKc"/>
    <property type="match status" value="1"/>
</dbReference>
<dbReference type="SUPFAM" id="SSF56112">
    <property type="entry name" value="Protein kinase-like (PK-like)"/>
    <property type="match status" value="1"/>
</dbReference>
<dbReference type="PROSITE" id="PS51285">
    <property type="entry name" value="AGC_KINASE_CTER"/>
    <property type="match status" value="1"/>
</dbReference>
<dbReference type="PROSITE" id="PS00107">
    <property type="entry name" value="PROTEIN_KINASE_ATP"/>
    <property type="match status" value="1"/>
</dbReference>
<dbReference type="PROSITE" id="PS50011">
    <property type="entry name" value="PROTEIN_KINASE_DOM"/>
    <property type="match status" value="1"/>
</dbReference>
<dbReference type="PROSITE" id="PS00108">
    <property type="entry name" value="PROTEIN_KINASE_ST"/>
    <property type="match status" value="1"/>
</dbReference>
<organism>
    <name type="scientific">Schizosaccharomyces pombe (strain 972 / ATCC 24843)</name>
    <name type="common">Fission yeast</name>
    <dbReference type="NCBI Taxonomy" id="284812"/>
    <lineage>
        <taxon>Eukaryota</taxon>
        <taxon>Fungi</taxon>
        <taxon>Dikarya</taxon>
        <taxon>Ascomycota</taxon>
        <taxon>Taphrinomycotina</taxon>
        <taxon>Schizosaccharomycetes</taxon>
        <taxon>Schizosaccharomycetales</taxon>
        <taxon>Schizosaccharomycetaceae</taxon>
        <taxon>Schizosaccharomyces</taxon>
    </lineage>
</organism>
<keyword id="KW-0067">ATP-binding</keyword>
<keyword id="KW-0114">cAMP</keyword>
<keyword id="KW-0418">Kinase</keyword>
<keyword id="KW-0547">Nucleotide-binding</keyword>
<keyword id="KW-0597">Phosphoprotein</keyword>
<keyword id="KW-1185">Reference proteome</keyword>
<keyword id="KW-0723">Serine/threonine-protein kinase</keyword>
<keyword id="KW-0808">Transferase</keyword>
<accession>P40376</accession>
<feature type="chain" id="PRO_0000086047" description="cAMP-dependent protein kinase catalytic subunit">
    <location>
        <begin position="1"/>
        <end position="512"/>
    </location>
</feature>
<feature type="domain" description="Protein kinase" evidence="2">
    <location>
        <begin position="201"/>
        <end position="456"/>
    </location>
</feature>
<feature type="domain" description="AGC-kinase C-terminal" evidence="3">
    <location>
        <begin position="457"/>
        <end position="512"/>
    </location>
</feature>
<feature type="region of interest" description="Disordered" evidence="5">
    <location>
        <begin position="1"/>
        <end position="79"/>
    </location>
</feature>
<feature type="region of interest" description="Disordered" evidence="5">
    <location>
        <begin position="118"/>
        <end position="166"/>
    </location>
</feature>
<feature type="compositionally biased region" description="Polar residues" evidence="5">
    <location>
        <begin position="1"/>
        <end position="15"/>
    </location>
</feature>
<feature type="compositionally biased region" description="Low complexity" evidence="5">
    <location>
        <begin position="16"/>
        <end position="27"/>
    </location>
</feature>
<feature type="compositionally biased region" description="Polar residues" evidence="5">
    <location>
        <begin position="32"/>
        <end position="52"/>
    </location>
</feature>
<feature type="compositionally biased region" description="Polar residues" evidence="5">
    <location>
        <begin position="62"/>
        <end position="79"/>
    </location>
</feature>
<feature type="compositionally biased region" description="Basic and acidic residues" evidence="5">
    <location>
        <begin position="143"/>
        <end position="166"/>
    </location>
</feature>
<feature type="active site" description="Proton acceptor" evidence="2 4">
    <location>
        <position position="324"/>
    </location>
</feature>
<feature type="binding site" evidence="2">
    <location>
        <begin position="207"/>
        <end position="215"/>
    </location>
    <ligand>
        <name>ATP</name>
        <dbReference type="ChEBI" id="CHEBI:30616"/>
    </ligand>
</feature>
<feature type="binding site" evidence="2">
    <location>
        <position position="230"/>
    </location>
    <ligand>
        <name>ATP</name>
        <dbReference type="ChEBI" id="CHEBI:30616"/>
    </ligand>
</feature>
<feature type="modified residue" description="Phosphothreonine" evidence="6">
    <location>
        <position position="356"/>
    </location>
</feature>
<gene>
    <name type="primary">pka1</name>
    <name type="synonym">tpk</name>
    <name type="ORF">SPBC106.10</name>
</gene>
<proteinExistence type="evidence at protein level"/>
<reference key="1">
    <citation type="journal article" date="1994" name="Gene">
        <title>The Schizosaccharomyces pombe pka1 gene, encoding a homolog of cAMP-dependent protein kinase.</title>
        <authorList>
            <person name="Yu G."/>
            <person name="Li J."/>
            <person name="Young D."/>
        </authorList>
    </citation>
    <scope>NUCLEOTIDE SEQUENCE [MRNA]</scope>
</reference>
<reference key="2">
    <citation type="journal article" date="1994" name="J. Biol. Chem.">
        <title>Cloning of the pka1 gene encoding the catalytic subunit of the cAMP-dependent protein kinase in Schizosaccharomyces pombe.</title>
        <authorList>
            <person name="Maeda T."/>
            <person name="Watanabe Y."/>
            <person name="Kunitomo H."/>
            <person name="Yamamoto M."/>
        </authorList>
    </citation>
    <scope>NUCLEOTIDE SEQUENCE [GENOMIC DNA]</scope>
</reference>
<reference key="3">
    <citation type="journal article" date="2002" name="Nature">
        <title>The genome sequence of Schizosaccharomyces pombe.</title>
        <authorList>
            <person name="Wood V."/>
            <person name="Gwilliam R."/>
            <person name="Rajandream M.A."/>
            <person name="Lyne M.H."/>
            <person name="Lyne R."/>
            <person name="Stewart A."/>
            <person name="Sgouros J.G."/>
            <person name="Peat N."/>
            <person name="Hayles J."/>
            <person name="Baker S.G."/>
            <person name="Basham D."/>
            <person name="Bowman S."/>
            <person name="Brooks K."/>
            <person name="Brown D."/>
            <person name="Brown S."/>
            <person name="Chillingworth T."/>
            <person name="Churcher C.M."/>
            <person name="Collins M."/>
            <person name="Connor R."/>
            <person name="Cronin A."/>
            <person name="Davis P."/>
            <person name="Feltwell T."/>
            <person name="Fraser A."/>
            <person name="Gentles S."/>
            <person name="Goble A."/>
            <person name="Hamlin N."/>
            <person name="Harris D.E."/>
            <person name="Hidalgo J."/>
            <person name="Hodgson G."/>
            <person name="Holroyd S."/>
            <person name="Hornsby T."/>
            <person name="Howarth S."/>
            <person name="Huckle E.J."/>
            <person name="Hunt S."/>
            <person name="Jagels K."/>
            <person name="James K.D."/>
            <person name="Jones L."/>
            <person name="Jones M."/>
            <person name="Leather S."/>
            <person name="McDonald S."/>
            <person name="McLean J."/>
            <person name="Mooney P."/>
            <person name="Moule S."/>
            <person name="Mungall K.L."/>
            <person name="Murphy L.D."/>
            <person name="Niblett D."/>
            <person name="Odell C."/>
            <person name="Oliver K."/>
            <person name="O'Neil S."/>
            <person name="Pearson D."/>
            <person name="Quail M.A."/>
            <person name="Rabbinowitsch E."/>
            <person name="Rutherford K.M."/>
            <person name="Rutter S."/>
            <person name="Saunders D."/>
            <person name="Seeger K."/>
            <person name="Sharp S."/>
            <person name="Skelton J."/>
            <person name="Simmonds M.N."/>
            <person name="Squares R."/>
            <person name="Squares S."/>
            <person name="Stevens K."/>
            <person name="Taylor K."/>
            <person name="Taylor R.G."/>
            <person name="Tivey A."/>
            <person name="Walsh S.V."/>
            <person name="Warren T."/>
            <person name="Whitehead S."/>
            <person name="Woodward J.R."/>
            <person name="Volckaert G."/>
            <person name="Aert R."/>
            <person name="Robben J."/>
            <person name="Grymonprez B."/>
            <person name="Weltjens I."/>
            <person name="Vanstreels E."/>
            <person name="Rieger M."/>
            <person name="Schaefer M."/>
            <person name="Mueller-Auer S."/>
            <person name="Gabel C."/>
            <person name="Fuchs M."/>
            <person name="Duesterhoeft A."/>
            <person name="Fritzc C."/>
            <person name="Holzer E."/>
            <person name="Moestl D."/>
            <person name="Hilbert H."/>
            <person name="Borzym K."/>
            <person name="Langer I."/>
            <person name="Beck A."/>
            <person name="Lehrach H."/>
            <person name="Reinhardt R."/>
            <person name="Pohl T.M."/>
            <person name="Eger P."/>
            <person name="Zimmermann W."/>
            <person name="Wedler H."/>
            <person name="Wambutt R."/>
            <person name="Purnelle B."/>
            <person name="Goffeau A."/>
            <person name="Cadieu E."/>
            <person name="Dreano S."/>
            <person name="Gloux S."/>
            <person name="Lelaure V."/>
            <person name="Mottier S."/>
            <person name="Galibert F."/>
            <person name="Aves S.J."/>
            <person name="Xiang Z."/>
            <person name="Hunt C."/>
            <person name="Moore K."/>
            <person name="Hurst S.M."/>
            <person name="Lucas M."/>
            <person name="Rochet M."/>
            <person name="Gaillardin C."/>
            <person name="Tallada V.A."/>
            <person name="Garzon A."/>
            <person name="Thode G."/>
            <person name="Daga R.R."/>
            <person name="Cruzado L."/>
            <person name="Jimenez J."/>
            <person name="Sanchez M."/>
            <person name="del Rey F."/>
            <person name="Benito J."/>
            <person name="Dominguez A."/>
            <person name="Revuelta J.L."/>
            <person name="Moreno S."/>
            <person name="Armstrong J."/>
            <person name="Forsburg S.L."/>
            <person name="Cerutti L."/>
            <person name="Lowe T."/>
            <person name="McCombie W.R."/>
            <person name="Paulsen I."/>
            <person name="Potashkin J."/>
            <person name="Shpakovski G.V."/>
            <person name="Ussery D."/>
            <person name="Barrell B.G."/>
            <person name="Nurse P."/>
        </authorList>
    </citation>
    <scope>NUCLEOTIDE SEQUENCE [LARGE SCALE GENOMIC DNA]</scope>
    <source>
        <strain>972 / ATCC 24843</strain>
    </source>
</reference>
<reference key="4">
    <citation type="journal article" date="2008" name="J. Proteome Res.">
        <title>Phosphoproteome analysis of fission yeast.</title>
        <authorList>
            <person name="Wilson-Grady J.T."/>
            <person name="Villen J."/>
            <person name="Gygi S.P."/>
        </authorList>
    </citation>
    <scope>PHOSPHORYLATION [LARGE SCALE ANALYSIS] AT THR-356</scope>
    <scope>IDENTIFICATION BY MASS SPECTROMETRY</scope>
</reference>
<name>KAPB_SCHPO</name>
<sequence length="512" mass="57578">MDTTAVASKGSTNVGSSTDTLSTSASLHPSMNAGSVNEYSEQQRHGTNSFNGKPSVHDSVGSDASVSNGHNNHNESSLWTSGIPKALEEATKSKKPDSLVSTSTSGCASAHSVGYQNIDNLIPSPLPESASRSSSQSSHQRHSRDGRGELGSEHGERRSAMDGLRDRHIRKVRVSQLLDLQRRRIRPADHTTKDRYGIQDFNFLQTLGTGSFGRVHLVQSNHNRLYYAIKVLEKKKIVDMKQIEHTCDERYILSRVQHPFITILWGTFQDAKNLFMVMDFAEGGELFSLLRKCHRFPEKVAKFYAAEVILALDYLHHNQIVYRDLKPENLLLDRFGHLKIVDFGFAKRVSTSNCCTLCGTPDYLAPEIISLKPYNKAADWWSLGILIFEMLAGYPPFYSENPMKLYENILEGKVNYPSYFSPASIDLLSHLLQRDITCRYGNLKDGSMDIIMHPWFRDISWDKILTRKIEVPYVPPIQAGMGDSSQFDAYADVATDYGTSEDPEFTSIFKDF</sequence>